<feature type="chain" id="PRO_0000454735" description="Protein YkfO">
    <location>
        <begin position="1"/>
        <end position="10"/>
    </location>
</feature>
<accession>P0DUW0</accession>
<comment type="induction">
    <text evidence="1">Identified when cells are grown in rich medium (at protein level).</text>
</comment>
<comment type="miscellaneous">
    <text evidence="1">This gene is entirely within the gloB gene on the other strand.</text>
</comment>
<name>YKFO_ECOLI</name>
<proteinExistence type="evidence at protein level"/>
<evidence type="ECO:0000269" key="1">
    <source>
    </source>
</evidence>
<evidence type="ECO:0000303" key="2">
    <source>
    </source>
</evidence>
<evidence type="ECO:0000312" key="3">
    <source>
        <dbReference type="EMBL" id="UMR55111.1"/>
    </source>
</evidence>
<organism>
    <name type="scientific">Escherichia coli (strain K12)</name>
    <dbReference type="NCBI Taxonomy" id="83333"/>
    <lineage>
        <taxon>Bacteria</taxon>
        <taxon>Pseudomonadati</taxon>
        <taxon>Pseudomonadota</taxon>
        <taxon>Gammaproteobacteria</taxon>
        <taxon>Enterobacterales</taxon>
        <taxon>Enterobacteriaceae</taxon>
        <taxon>Escherichia</taxon>
    </lineage>
</organism>
<protein>
    <recommendedName>
        <fullName evidence="2">Protein YkfO</fullName>
    </recommendedName>
</protein>
<dbReference type="EMBL" id="U00096">
    <property type="protein sequence ID" value="UMR55111.1"/>
    <property type="molecule type" value="Genomic_DNA"/>
</dbReference>
<dbReference type="InParanoid" id="P0DUW0"/>
<dbReference type="BioCyc" id="EcoCyc:MONOMER0-4543"/>
<dbReference type="Proteomes" id="UP000000625">
    <property type="component" value="Chromosome"/>
</dbReference>
<keyword id="KW-1185">Reference proteome</keyword>
<sequence>MSTTYQCIVR</sequence>
<reference key="1">
    <citation type="journal article" date="1997" name="Science">
        <title>The complete genome sequence of Escherichia coli K-12.</title>
        <authorList>
            <person name="Blattner F.R."/>
            <person name="Plunkett G. III"/>
            <person name="Bloch C.A."/>
            <person name="Perna N.T."/>
            <person name="Burland V."/>
            <person name="Riley M."/>
            <person name="Collado-Vides J."/>
            <person name="Glasner J.D."/>
            <person name="Rode C.K."/>
            <person name="Mayhew G.F."/>
            <person name="Gregor J."/>
            <person name="Davis N.W."/>
            <person name="Kirkpatrick H.A."/>
            <person name="Goeden M.A."/>
            <person name="Rose D.J."/>
            <person name="Mau B."/>
            <person name="Shao Y."/>
        </authorList>
    </citation>
    <scope>NUCLEOTIDE SEQUENCE [LARGE SCALE GENOMIC DNA]</scope>
    <source>
        <strain>K12 / MG1655 / ATCC 47076</strain>
    </source>
</reference>
<reference key="2">
    <citation type="journal article" date="2022" name="J. Bacteriol.">
        <title>Identification of novel translated small ORFs in Escherichia coli using complementary ribosome profiling approaches.</title>
        <authorList>
            <person name="Stringer A."/>
            <person name="Smith C."/>
            <person name="Mangano K."/>
            <person name="Wade J.T."/>
        </authorList>
    </citation>
    <scope>IDENTIFICATION</scope>
    <source>
        <strain>K12 / MG1655 / ATCC 47076</strain>
    </source>
</reference>
<gene>
    <name evidence="2" type="primary">ykfO</name>
    <name evidence="3" type="ordered locus">b4815</name>
</gene>